<name>MIAB_AERS4</name>
<comment type="function">
    <text evidence="1">Catalyzes the methylthiolation of N6-(dimethylallyl)adenosine (i(6)A), leading to the formation of 2-methylthio-N6-(dimethylallyl)adenosine (ms(2)i(6)A) at position 37 in tRNAs that read codons beginning with uridine.</text>
</comment>
<comment type="catalytic activity">
    <reaction evidence="1">
        <text>N(6)-dimethylallyladenosine(37) in tRNA + (sulfur carrier)-SH + AH2 + 2 S-adenosyl-L-methionine = 2-methylsulfanyl-N(6)-dimethylallyladenosine(37) in tRNA + (sulfur carrier)-H + 5'-deoxyadenosine + L-methionine + A + S-adenosyl-L-homocysteine + 2 H(+)</text>
        <dbReference type="Rhea" id="RHEA:37067"/>
        <dbReference type="Rhea" id="RHEA-COMP:10375"/>
        <dbReference type="Rhea" id="RHEA-COMP:10376"/>
        <dbReference type="Rhea" id="RHEA-COMP:14737"/>
        <dbReference type="Rhea" id="RHEA-COMP:14739"/>
        <dbReference type="ChEBI" id="CHEBI:13193"/>
        <dbReference type="ChEBI" id="CHEBI:15378"/>
        <dbReference type="ChEBI" id="CHEBI:17319"/>
        <dbReference type="ChEBI" id="CHEBI:17499"/>
        <dbReference type="ChEBI" id="CHEBI:29917"/>
        <dbReference type="ChEBI" id="CHEBI:57844"/>
        <dbReference type="ChEBI" id="CHEBI:57856"/>
        <dbReference type="ChEBI" id="CHEBI:59789"/>
        <dbReference type="ChEBI" id="CHEBI:64428"/>
        <dbReference type="ChEBI" id="CHEBI:74415"/>
        <dbReference type="ChEBI" id="CHEBI:74417"/>
        <dbReference type="EC" id="2.8.4.3"/>
    </reaction>
</comment>
<comment type="cofactor">
    <cofactor evidence="1">
        <name>[4Fe-4S] cluster</name>
        <dbReference type="ChEBI" id="CHEBI:49883"/>
    </cofactor>
    <text evidence="1">Binds 2 [4Fe-4S] clusters. One cluster is coordinated with 3 cysteines and an exchangeable S-adenosyl-L-methionine.</text>
</comment>
<comment type="subunit">
    <text evidence="1">Monomer.</text>
</comment>
<comment type="subcellular location">
    <subcellularLocation>
        <location evidence="1">Cytoplasm</location>
    </subcellularLocation>
</comment>
<comment type="similarity">
    <text evidence="1">Belongs to the methylthiotransferase family. MiaB subfamily.</text>
</comment>
<dbReference type="EC" id="2.8.4.3" evidence="1"/>
<dbReference type="EMBL" id="CP000644">
    <property type="protein sequence ID" value="ABO89196.1"/>
    <property type="molecule type" value="Genomic_DNA"/>
</dbReference>
<dbReference type="RefSeq" id="WP_005317314.1">
    <property type="nucleotide sequence ID" value="NC_009348.1"/>
</dbReference>
<dbReference type="SMR" id="A4SJX4"/>
<dbReference type="STRING" id="29491.GCA_000820065_02563"/>
<dbReference type="GeneID" id="79878722"/>
<dbReference type="KEGG" id="asa:ASA_1074"/>
<dbReference type="eggNOG" id="COG0621">
    <property type="taxonomic scope" value="Bacteria"/>
</dbReference>
<dbReference type="HOGENOM" id="CLU_018697_2_0_6"/>
<dbReference type="Proteomes" id="UP000000225">
    <property type="component" value="Chromosome"/>
</dbReference>
<dbReference type="GO" id="GO:0005829">
    <property type="term" value="C:cytosol"/>
    <property type="evidence" value="ECO:0007669"/>
    <property type="project" value="TreeGrafter"/>
</dbReference>
<dbReference type="GO" id="GO:0051539">
    <property type="term" value="F:4 iron, 4 sulfur cluster binding"/>
    <property type="evidence" value="ECO:0007669"/>
    <property type="project" value="UniProtKB-UniRule"/>
</dbReference>
<dbReference type="GO" id="GO:0046872">
    <property type="term" value="F:metal ion binding"/>
    <property type="evidence" value="ECO:0007669"/>
    <property type="project" value="UniProtKB-KW"/>
</dbReference>
<dbReference type="GO" id="GO:0035597">
    <property type="term" value="F:N6-isopentenyladenosine methylthiotransferase activity"/>
    <property type="evidence" value="ECO:0007669"/>
    <property type="project" value="TreeGrafter"/>
</dbReference>
<dbReference type="CDD" id="cd01335">
    <property type="entry name" value="Radical_SAM"/>
    <property type="match status" value="1"/>
</dbReference>
<dbReference type="FunFam" id="3.40.50.12160:FF:000001">
    <property type="entry name" value="tRNA-2-methylthio-N(6)-dimethylallyladenosine synthase"/>
    <property type="match status" value="1"/>
</dbReference>
<dbReference type="FunFam" id="3.80.30.20:FF:000001">
    <property type="entry name" value="tRNA-2-methylthio-N(6)-dimethylallyladenosine synthase 2"/>
    <property type="match status" value="1"/>
</dbReference>
<dbReference type="Gene3D" id="3.40.50.12160">
    <property type="entry name" value="Methylthiotransferase, N-terminal domain"/>
    <property type="match status" value="1"/>
</dbReference>
<dbReference type="Gene3D" id="3.80.30.20">
    <property type="entry name" value="tm_1862 like domain"/>
    <property type="match status" value="1"/>
</dbReference>
<dbReference type="HAMAP" id="MF_01864">
    <property type="entry name" value="tRNA_metthiotr_MiaB"/>
    <property type="match status" value="1"/>
</dbReference>
<dbReference type="InterPro" id="IPR006638">
    <property type="entry name" value="Elp3/MiaA/NifB-like_rSAM"/>
</dbReference>
<dbReference type="InterPro" id="IPR005839">
    <property type="entry name" value="Methylthiotransferase"/>
</dbReference>
<dbReference type="InterPro" id="IPR020612">
    <property type="entry name" value="Methylthiotransferase_CS"/>
</dbReference>
<dbReference type="InterPro" id="IPR013848">
    <property type="entry name" value="Methylthiotransferase_N"/>
</dbReference>
<dbReference type="InterPro" id="IPR038135">
    <property type="entry name" value="Methylthiotransferase_N_sf"/>
</dbReference>
<dbReference type="InterPro" id="IPR006463">
    <property type="entry name" value="MiaB_methiolase"/>
</dbReference>
<dbReference type="InterPro" id="IPR007197">
    <property type="entry name" value="rSAM"/>
</dbReference>
<dbReference type="InterPro" id="IPR023404">
    <property type="entry name" value="rSAM_horseshoe"/>
</dbReference>
<dbReference type="InterPro" id="IPR002792">
    <property type="entry name" value="TRAM_dom"/>
</dbReference>
<dbReference type="NCBIfam" id="TIGR01574">
    <property type="entry name" value="miaB-methiolase"/>
    <property type="match status" value="1"/>
</dbReference>
<dbReference type="NCBIfam" id="TIGR00089">
    <property type="entry name" value="MiaB/RimO family radical SAM methylthiotransferase"/>
    <property type="match status" value="1"/>
</dbReference>
<dbReference type="PANTHER" id="PTHR43020">
    <property type="entry name" value="CDK5 REGULATORY SUBUNIT-ASSOCIATED PROTEIN 1"/>
    <property type="match status" value="1"/>
</dbReference>
<dbReference type="PANTHER" id="PTHR43020:SF2">
    <property type="entry name" value="MITOCHONDRIAL TRNA METHYLTHIOTRANSFERASE CDK5RAP1"/>
    <property type="match status" value="1"/>
</dbReference>
<dbReference type="Pfam" id="PF04055">
    <property type="entry name" value="Radical_SAM"/>
    <property type="match status" value="1"/>
</dbReference>
<dbReference type="Pfam" id="PF01938">
    <property type="entry name" value="TRAM"/>
    <property type="match status" value="1"/>
</dbReference>
<dbReference type="Pfam" id="PF00919">
    <property type="entry name" value="UPF0004"/>
    <property type="match status" value="1"/>
</dbReference>
<dbReference type="SFLD" id="SFLDF00273">
    <property type="entry name" value="(dimethylallyl)adenosine_tRNA"/>
    <property type="match status" value="1"/>
</dbReference>
<dbReference type="SFLD" id="SFLDG01082">
    <property type="entry name" value="B12-binding_domain_containing"/>
    <property type="match status" value="1"/>
</dbReference>
<dbReference type="SFLD" id="SFLDG01061">
    <property type="entry name" value="methylthiotransferase"/>
    <property type="match status" value="1"/>
</dbReference>
<dbReference type="SMART" id="SM00729">
    <property type="entry name" value="Elp3"/>
    <property type="match status" value="1"/>
</dbReference>
<dbReference type="SUPFAM" id="SSF102114">
    <property type="entry name" value="Radical SAM enzymes"/>
    <property type="match status" value="1"/>
</dbReference>
<dbReference type="PROSITE" id="PS51449">
    <property type="entry name" value="MTTASE_N"/>
    <property type="match status" value="1"/>
</dbReference>
<dbReference type="PROSITE" id="PS01278">
    <property type="entry name" value="MTTASE_RADICAL"/>
    <property type="match status" value="1"/>
</dbReference>
<dbReference type="PROSITE" id="PS51918">
    <property type="entry name" value="RADICAL_SAM"/>
    <property type="match status" value="1"/>
</dbReference>
<dbReference type="PROSITE" id="PS50926">
    <property type="entry name" value="TRAM"/>
    <property type="match status" value="1"/>
</dbReference>
<accession>A4SJX4</accession>
<sequence length="477" mass="53411">MSKKLHIKTWGCQMNEYDSSKMADLLDASNGYTLTEEPEEADVLLLNTCSIREKAQEKVFHQLGRWKKLKANKPGLVIGVGGCVASQEGENIRSRAPYVDIVFGPQTLHRLPAMIKQVQEGRGAQVDIAFPEIEKFDSLPEPRAEGATAFVSIMEGCSKYCSFCVVPYTRGEEVSRPMDDVLYEIAQLAEQGVREVNLLGQNVNAYRGPTFDGSICSFAELLRLVAAIDGIDRIRYTTSHPIEFTDDIIEVYKDTPEVVSFLHLPVQSGSDRILTMMKRPHTVLEYKSKIRRLRAARPDITISSDFIVGFPNETDEDFEATMKLIEEINFDMSFSFIYSPRPGTPAADMPDDVDMEVKKVRLARLQHVINNQSMQIGRAMLGSTQRILVEGPSRLDPMQLCGRTENNRVVNFEGAHTLIGGFADVEITEVRPNSLRGRFIRGEDEMNLRIATAPREILARRPDNVPDALGVAAFTPH</sequence>
<feature type="chain" id="PRO_0000374098" description="tRNA-2-methylthio-N(6)-dimethylallyladenosine synthase">
    <location>
        <begin position="1"/>
        <end position="477"/>
    </location>
</feature>
<feature type="domain" description="MTTase N-terminal" evidence="1">
    <location>
        <begin position="3"/>
        <end position="120"/>
    </location>
</feature>
<feature type="domain" description="Radical SAM core" evidence="2">
    <location>
        <begin position="143"/>
        <end position="375"/>
    </location>
</feature>
<feature type="domain" description="TRAM" evidence="1">
    <location>
        <begin position="378"/>
        <end position="441"/>
    </location>
</feature>
<feature type="binding site" evidence="1">
    <location>
        <position position="12"/>
    </location>
    <ligand>
        <name>[4Fe-4S] cluster</name>
        <dbReference type="ChEBI" id="CHEBI:49883"/>
        <label>1</label>
    </ligand>
</feature>
<feature type="binding site" evidence="1">
    <location>
        <position position="49"/>
    </location>
    <ligand>
        <name>[4Fe-4S] cluster</name>
        <dbReference type="ChEBI" id="CHEBI:49883"/>
        <label>1</label>
    </ligand>
</feature>
<feature type="binding site" evidence="1">
    <location>
        <position position="83"/>
    </location>
    <ligand>
        <name>[4Fe-4S] cluster</name>
        <dbReference type="ChEBI" id="CHEBI:49883"/>
        <label>1</label>
    </ligand>
</feature>
<feature type="binding site" evidence="1">
    <location>
        <position position="157"/>
    </location>
    <ligand>
        <name>[4Fe-4S] cluster</name>
        <dbReference type="ChEBI" id="CHEBI:49883"/>
        <label>2</label>
        <note>4Fe-4S-S-AdoMet</note>
    </ligand>
</feature>
<feature type="binding site" evidence="1">
    <location>
        <position position="161"/>
    </location>
    <ligand>
        <name>[4Fe-4S] cluster</name>
        <dbReference type="ChEBI" id="CHEBI:49883"/>
        <label>2</label>
        <note>4Fe-4S-S-AdoMet</note>
    </ligand>
</feature>
<feature type="binding site" evidence="1">
    <location>
        <position position="164"/>
    </location>
    <ligand>
        <name>[4Fe-4S] cluster</name>
        <dbReference type="ChEBI" id="CHEBI:49883"/>
        <label>2</label>
        <note>4Fe-4S-S-AdoMet</note>
    </ligand>
</feature>
<proteinExistence type="inferred from homology"/>
<reference key="1">
    <citation type="journal article" date="2008" name="BMC Genomics">
        <title>The genome of Aeromonas salmonicida subsp. salmonicida A449: insights into the evolution of a fish pathogen.</title>
        <authorList>
            <person name="Reith M.E."/>
            <person name="Singh R.K."/>
            <person name="Curtis B."/>
            <person name="Boyd J.M."/>
            <person name="Bouevitch A."/>
            <person name="Kimball J."/>
            <person name="Munholland J."/>
            <person name="Murphy C."/>
            <person name="Sarty D."/>
            <person name="Williams J."/>
            <person name="Nash J.H."/>
            <person name="Johnson S.C."/>
            <person name="Brown L.L."/>
        </authorList>
    </citation>
    <scope>NUCLEOTIDE SEQUENCE [LARGE SCALE GENOMIC DNA]</scope>
    <source>
        <strain>A449</strain>
    </source>
</reference>
<gene>
    <name evidence="1" type="primary">miaB</name>
    <name type="ordered locus">ASA_1074</name>
</gene>
<protein>
    <recommendedName>
        <fullName evidence="1">tRNA-2-methylthio-N(6)-dimethylallyladenosine synthase</fullName>
        <ecNumber evidence="1">2.8.4.3</ecNumber>
    </recommendedName>
    <alternativeName>
        <fullName evidence="1">(Dimethylallyl)adenosine tRNA methylthiotransferase MiaB</fullName>
    </alternativeName>
    <alternativeName>
        <fullName evidence="1">tRNA-i(6)A37 methylthiotransferase</fullName>
    </alternativeName>
</protein>
<keyword id="KW-0004">4Fe-4S</keyword>
<keyword id="KW-0963">Cytoplasm</keyword>
<keyword id="KW-0408">Iron</keyword>
<keyword id="KW-0411">Iron-sulfur</keyword>
<keyword id="KW-0479">Metal-binding</keyword>
<keyword id="KW-0949">S-adenosyl-L-methionine</keyword>
<keyword id="KW-0808">Transferase</keyword>
<keyword id="KW-0819">tRNA processing</keyword>
<evidence type="ECO:0000255" key="1">
    <source>
        <dbReference type="HAMAP-Rule" id="MF_01864"/>
    </source>
</evidence>
<evidence type="ECO:0000255" key="2">
    <source>
        <dbReference type="PROSITE-ProRule" id="PRU01266"/>
    </source>
</evidence>
<organism>
    <name type="scientific">Aeromonas salmonicida (strain A449)</name>
    <dbReference type="NCBI Taxonomy" id="382245"/>
    <lineage>
        <taxon>Bacteria</taxon>
        <taxon>Pseudomonadati</taxon>
        <taxon>Pseudomonadota</taxon>
        <taxon>Gammaproteobacteria</taxon>
        <taxon>Aeromonadales</taxon>
        <taxon>Aeromonadaceae</taxon>
        <taxon>Aeromonas</taxon>
    </lineage>
</organism>